<protein>
    <recommendedName>
        <fullName evidence="5 6">Protein NONRESPONDING TO OXYLIPINS 2, mitochondrial</fullName>
    </recommendedName>
</protein>
<proteinExistence type="evidence at protein level"/>
<reference key="1">
    <citation type="journal article" date="2000" name="Nature">
        <title>Sequence and analysis of chromosome 5 of the plant Arabidopsis thaliana.</title>
        <authorList>
            <person name="Tabata S."/>
            <person name="Kaneko T."/>
            <person name="Nakamura Y."/>
            <person name="Kotani H."/>
            <person name="Kato T."/>
            <person name="Asamizu E."/>
            <person name="Miyajima N."/>
            <person name="Sasamoto S."/>
            <person name="Kimura T."/>
            <person name="Hosouchi T."/>
            <person name="Kawashima K."/>
            <person name="Kohara M."/>
            <person name="Matsumoto M."/>
            <person name="Matsuno A."/>
            <person name="Muraki A."/>
            <person name="Nakayama S."/>
            <person name="Nakazaki N."/>
            <person name="Naruo K."/>
            <person name="Okumura S."/>
            <person name="Shinpo S."/>
            <person name="Takeuchi C."/>
            <person name="Wada T."/>
            <person name="Watanabe A."/>
            <person name="Yamada M."/>
            <person name="Yasuda M."/>
            <person name="Sato S."/>
            <person name="de la Bastide M."/>
            <person name="Huang E."/>
            <person name="Spiegel L."/>
            <person name="Gnoj L."/>
            <person name="O'Shaughnessy A."/>
            <person name="Preston R."/>
            <person name="Habermann K."/>
            <person name="Murray J."/>
            <person name="Johnson D."/>
            <person name="Rohlfing T."/>
            <person name="Nelson J."/>
            <person name="Stoneking T."/>
            <person name="Pepin K."/>
            <person name="Spieth J."/>
            <person name="Sekhon M."/>
            <person name="Armstrong J."/>
            <person name="Becker M."/>
            <person name="Belter E."/>
            <person name="Cordum H."/>
            <person name="Cordes M."/>
            <person name="Courtney L."/>
            <person name="Courtney W."/>
            <person name="Dante M."/>
            <person name="Du H."/>
            <person name="Edwards J."/>
            <person name="Fryman J."/>
            <person name="Haakensen B."/>
            <person name="Lamar E."/>
            <person name="Latreille P."/>
            <person name="Leonard S."/>
            <person name="Meyer R."/>
            <person name="Mulvaney E."/>
            <person name="Ozersky P."/>
            <person name="Riley A."/>
            <person name="Strowmatt C."/>
            <person name="Wagner-McPherson C."/>
            <person name="Wollam A."/>
            <person name="Yoakum M."/>
            <person name="Bell M."/>
            <person name="Dedhia N."/>
            <person name="Parnell L."/>
            <person name="Shah R."/>
            <person name="Rodriguez M."/>
            <person name="Hoon See L."/>
            <person name="Vil D."/>
            <person name="Baker J."/>
            <person name="Kirchoff K."/>
            <person name="Toth K."/>
            <person name="King L."/>
            <person name="Bahret A."/>
            <person name="Miller B."/>
            <person name="Marra M.A."/>
            <person name="Martienssen R."/>
            <person name="McCombie W.R."/>
            <person name="Wilson R.K."/>
            <person name="Murphy G."/>
            <person name="Bancroft I."/>
            <person name="Volckaert G."/>
            <person name="Wambutt R."/>
            <person name="Duesterhoeft A."/>
            <person name="Stiekema W."/>
            <person name="Pohl T."/>
            <person name="Entian K.-D."/>
            <person name="Terryn N."/>
            <person name="Hartley N."/>
            <person name="Bent E."/>
            <person name="Johnson S."/>
            <person name="Langham S.-A."/>
            <person name="McCullagh B."/>
            <person name="Robben J."/>
            <person name="Grymonprez B."/>
            <person name="Zimmermann W."/>
            <person name="Ramsperger U."/>
            <person name="Wedler H."/>
            <person name="Balke K."/>
            <person name="Wedler E."/>
            <person name="Peters S."/>
            <person name="van Staveren M."/>
            <person name="Dirkse W."/>
            <person name="Mooijman P."/>
            <person name="Klein Lankhorst R."/>
            <person name="Weitzenegger T."/>
            <person name="Bothe G."/>
            <person name="Rose M."/>
            <person name="Hauf J."/>
            <person name="Berneiser S."/>
            <person name="Hempel S."/>
            <person name="Feldpausch M."/>
            <person name="Lamberth S."/>
            <person name="Villarroel R."/>
            <person name="Gielen J."/>
            <person name="Ardiles W."/>
            <person name="Bents O."/>
            <person name="Lemcke K."/>
            <person name="Kolesov G."/>
            <person name="Mayer K.F.X."/>
            <person name="Rudd S."/>
            <person name="Schoof H."/>
            <person name="Schueller C."/>
            <person name="Zaccaria P."/>
            <person name="Mewes H.-W."/>
            <person name="Bevan M."/>
            <person name="Fransz P.F."/>
        </authorList>
    </citation>
    <scope>NUCLEOTIDE SEQUENCE [LARGE SCALE GENOMIC DNA] (ISOFORM 2)</scope>
    <source>
        <strain>cv. Columbia</strain>
    </source>
</reference>
<reference key="2">
    <citation type="journal article" date="2017" name="Plant J.">
        <title>Araport11: a complete reannotation of the Arabidopsis thaliana reference genome.</title>
        <authorList>
            <person name="Cheng C.Y."/>
            <person name="Krishnakumar V."/>
            <person name="Chan A.P."/>
            <person name="Thibaud-Nissen F."/>
            <person name="Schobel S."/>
            <person name="Town C.D."/>
        </authorList>
    </citation>
    <scope>GENOME REANNOTATION</scope>
    <source>
        <strain>cv. Columbia</strain>
    </source>
</reference>
<reference key="3">
    <citation type="submission" date="2003-11" db="EMBL/GenBank/DDBJ databases">
        <title>Arabidopsis cDNA clones.</title>
        <authorList>
            <person name="Cheuk R.F."/>
            <person name="Chen H."/>
            <person name="Kim C.J."/>
            <person name="Shinn P."/>
            <person name="Ecker J.R."/>
        </authorList>
    </citation>
    <scope>NUCLEOTIDE SEQUENCE [LARGE SCALE MRNA]</scope>
    <source>
        <strain>cv. Columbia</strain>
    </source>
</reference>
<reference key="4">
    <citation type="journal article" date="2007" name="Plant Cell">
        <title>Oxylipins produced by the 9-lipoxygenase pathway in Arabidopsis regulate lateral root development and defense responses through a specific signaling cascade.</title>
        <authorList>
            <person name="Vellosillo T."/>
            <person name="Martinez M."/>
            <person name="Lopez M.A."/>
            <person name="Vicente J."/>
            <person name="Cascon T."/>
            <person name="Dolan L."/>
            <person name="Hamberg M."/>
            <person name="Castresana C."/>
        </authorList>
    </citation>
    <scope>FUNCTION</scope>
    <scope>DISRUPTION PHENOTYPE</scope>
    <source>
        <strain>cv. Columbia</strain>
    </source>
</reference>
<reference key="5">
    <citation type="journal article" date="2013" name="Plant Physiol.">
        <title>Defense activated by 9-lipoxygenase-derived oxylipins requires specific mitochondrial proteins.</title>
        <authorList>
            <person name="Vellosillo T."/>
            <person name="Aguilera V."/>
            <person name="Marcos R."/>
            <person name="Bartsch M."/>
            <person name="Vicente J."/>
            <person name="Cascon T."/>
            <person name="Hamberg M."/>
            <person name="Castresana C."/>
        </authorList>
    </citation>
    <scope>FUNCTION</scope>
    <scope>DISRUPTION PHENOTYPE</scope>
    <scope>MUTAGENESIS OF ALA-63</scope>
    <scope>SUBCELLULAR LOCATION</scope>
    <scope>TISSUE SPECIFICITY</scope>
    <scope>DEVELOPMENTAL STAGE</scope>
    <scope>INDUCTION BY PSEUDOMONAS SYRINGAE; ISOXABEN AND 9-HYDROXYOCTADECATRIENOIC ACID</scope>
    <scope>ALTERNATIVE SPLICING</scope>
    <source>
        <strain>cv. Columbia</strain>
    </source>
</reference>
<reference key="6">
    <citation type="journal article" date="2015" name="Plant Physiol.">
        <title>9-Lipoxygenase-derived oxylipins activate brassinosteroid signaling to promote cell wall-based defense and limit pathogen infection.</title>
        <authorList>
            <person name="Marcos R."/>
            <person name="Izquierdo Y."/>
            <person name="Vellosillo T."/>
            <person name="Kulasekaran S."/>
            <person name="Cascon T."/>
            <person name="Hamberg M."/>
            <person name="Castresana C."/>
        </authorList>
    </citation>
    <scope>FUNCTION</scope>
    <scope>DISRUPTION PHENOTYPE</scope>
    <source>
        <strain>cv. Columbia</strain>
    </source>
</reference>
<comment type="function">
    <molecule>Isoform 1</molecule>
    <text evidence="2 3 4">Essential for mitochondrial morphology, functionality and distribution (PubMed:23370715). Contributes to 9-lipoxygenase (9-LOX)-derived oxylipin synthesis, but not to brassinosteroids (BRs) signaling (PubMed:26417008). Required for waving-inducing oxylipin 9-hydroxyoctadecatrienoic acid and derivatives (e.g. 9-HOT, 2-HOE, 13-HOT, 13-HOD, 13-KOD, 12,13-KHOD, 9-HOT, 9-HOD, 9-KOT, 9-KOD and 9,10-KHOE)-mediated root development regulation, including callose deposition, root waving and lateral roots formation (PubMed:17369372, PubMed:23370715, PubMed:26417008). Involved in basal plant defense toward pathogenic bacteria (e.g. Pseudomonas syringae pv tomato), both in compatible (e.g. Pst DC3000) and incompatible (e.g. Pst DC3000 avrRPM1) interactions, as well as against obligate biotrophic pathogenic fungi (e.g. Golovinomyces cichoracearum), probably via the promotion of callose deposition in the cell wall (PubMed:17369372, PubMed:23370715, PubMed:26417008). Confers sensitivity to the herbicide isoxaben, a herbicide inhibiting cellulose synthesis and altering the cell wall (PubMed:23370715).</text>
</comment>
<comment type="subcellular location">
    <subcellularLocation>
        <location evidence="3">Mitochondrion</location>
    </subcellularLocation>
</comment>
<comment type="alternative products">
    <event type="alternative splicing"/>
    <isoform>
        <id>Q6NNL9-1</id>
        <name>1</name>
        <name evidence="6">NOXY2-alpha</name>
        <sequence type="displayed"/>
    </isoform>
    <isoform>
        <id>Q6NNL9-2</id>
        <name>2</name>
        <name evidence="6">NOXY2-beta</name>
        <sequence type="described" ref="VSP_060593"/>
    </isoform>
</comment>
<comment type="tissue specificity">
    <text evidence="3">Expressed in cotyledons, roots and flowers.</text>
</comment>
<comment type="developmental stage">
    <text evidence="3">First observed in vascular tissues, lateral root primordia, and root meristems.</text>
</comment>
<comment type="induction">
    <text evidence="3">Accumulates in cotyledons and roots after treatments with isoxaben (an herbicide) and 9-hydroxyoctadecatrienoic acid (9-HOT) (PubMed:23370715). Induced in leaves inoculated with Pseudomonas syringae pv tomato (Pst) (PubMed:23370715).</text>
</comment>
<comment type="disruption phenotype">
    <molecule>Isoform 1</molecule>
    <text evidence="2 3 4">Abnormal mitochondrial morphology, functionality and distribution (PubMed:23370715). Reduced sensitivity to isoxaben (an herbicide inhibiting cellulose synthesis and altering the cell wall) and to waving-inducing oxylipins such as 9-hydroxyoctadecatrienoic acid and derivatives (9-HOT, 2-HOE, 13-HOT, 13-HOD, 13-KOD, 12,13-KHOD, 9-HOT, 9-HOD, 9-KOT, 9-KOD and 9,10-KHOE) treatment leading to an altered root development (e.g. increased numbers of lateral roots, disrupted callose accumulation and altered root waving); 9-HOT is a potent inducer of root waving and an endogenous modulator of lateral root formation (PubMed:17369372, PubMed:23370715, PubMed:26417008). Enhanced susceptibility to pathogenic bacteria (e.g. Pseudomonas syringae pv tomato) both avirulent (e.g. Pst DC3000 avrRPM1) and virulent (e.g. Pst DC3000) strains associated with reduced and delayed expression of salicylic acid (SA)-responding pathogenesis-related genes (e.g. PR1, PR2 and PR4) and of 9-HOT-responsive genes (e.g. PER71, PIF3, CYP71A12 and GLP9); these phenotypes are associated with reduced callose deposition upon infection (PubMed:17369372, PubMed:23370715, PubMed:26417008). Increased susceptibility to the obligate biotrophic pathogenic fungus Golovinomyces cichoracearum (PubMed:26417008). Defective in 9-lipoxygenase (9-LOX)-derived oxylipin synthesis, but normal responses to brassinosteroids (BRs) (PubMed:26417008).</text>
</comment>
<sequence length="93" mass="9629">MASRCRSLSKPAFSAFRSAMNKPSIRPKSASSFIGVPPSPGFSRPIGQLGSLQSLLPLYSAVASARLTSCLGIDSQNSRSLAQGMLCSANPGV</sequence>
<accession>Q6NNL9</accession>
<accession>Q9LYG7</accession>
<keyword id="KW-0025">Alternative splicing</keyword>
<keyword id="KW-0496">Mitochondrion</keyword>
<keyword id="KW-0611">Plant defense</keyword>
<keyword id="KW-1185">Reference proteome</keyword>
<keyword id="KW-0809">Transit peptide</keyword>
<gene>
    <name evidence="5 6" type="primary">NOXY2</name>
    <name evidence="7" type="ordered locus">At5g11630</name>
    <name evidence="8" type="ORF">T22P22.20</name>
</gene>
<feature type="transit peptide" description="Mitochondrion" evidence="1">
    <location>
        <begin position="1"/>
        <end position="27"/>
    </location>
</feature>
<feature type="chain" id="PRO_0000450247" description="Protein NONRESPONDING TO OXYLIPINS 2, mitochondrial" evidence="1">
    <location>
        <begin position="28"/>
        <end position="93"/>
    </location>
</feature>
<feature type="splice variant" id="VSP_060593" description="In isoform 2." evidence="3">
    <original>GMLCSANPGV</original>
    <variation>ELGLSVPR</variation>
    <location>
        <begin position="84"/>
        <end position="93"/>
    </location>
</feature>
<feature type="mutagenesis site" description="In noxy2-1; altered mitochondrion morphology, functionality and distribution, as well as reduced sensitivity to the herbicide isoxaben and to waving-inducing oxylipins (e.g. 9-HOT)." evidence="3">
    <original>A</original>
    <variation>V</variation>
    <location>
        <position position="63"/>
    </location>
</feature>
<dbReference type="EMBL" id="AL163814">
    <property type="protein sequence ID" value="CAB87681.1"/>
    <property type="molecule type" value="Genomic_DNA"/>
</dbReference>
<dbReference type="EMBL" id="CP002688">
    <property type="protein sequence ID" value="AED91703.1"/>
    <property type="molecule type" value="Genomic_DNA"/>
</dbReference>
<dbReference type="EMBL" id="CP002688">
    <property type="protein sequence ID" value="AED91704.1"/>
    <property type="molecule type" value="Genomic_DNA"/>
</dbReference>
<dbReference type="EMBL" id="CP002688">
    <property type="protein sequence ID" value="ANM70780.1"/>
    <property type="molecule type" value="Genomic_DNA"/>
</dbReference>
<dbReference type="EMBL" id="BT010793">
    <property type="protein sequence ID" value="AAR24160.1"/>
    <property type="molecule type" value="mRNA"/>
</dbReference>
<dbReference type="EMBL" id="BT011267">
    <property type="protein sequence ID" value="AAR92303.1"/>
    <property type="molecule type" value="mRNA"/>
</dbReference>
<dbReference type="PIR" id="T48522">
    <property type="entry name" value="T48522"/>
</dbReference>
<dbReference type="RefSeq" id="NP_001078571.1">
    <molecule id="Q6NNL9-2"/>
    <property type="nucleotide sequence ID" value="NM_001085102.2"/>
</dbReference>
<dbReference type="RefSeq" id="NP_001332362.1">
    <molecule id="Q6NNL9-1"/>
    <property type="nucleotide sequence ID" value="NM_001343207.1"/>
</dbReference>
<dbReference type="RefSeq" id="NP_196724.3">
    <molecule id="Q6NNL9-1"/>
    <property type="nucleotide sequence ID" value="NM_121201.4"/>
</dbReference>
<dbReference type="FunCoup" id="Q6NNL9">
    <property type="interactions" value="352"/>
</dbReference>
<dbReference type="STRING" id="3702.Q9LYG7"/>
<dbReference type="PaxDb" id="3702-AT5G11630.1"/>
<dbReference type="EnsemblPlants" id="AT5G11630.1">
    <molecule id="Q6NNL9-1"/>
    <property type="protein sequence ID" value="AT5G11630.1"/>
    <property type="gene ID" value="AT5G11630"/>
</dbReference>
<dbReference type="EnsemblPlants" id="AT5G11630.2">
    <molecule id="Q6NNL9-2"/>
    <property type="protein sequence ID" value="AT5G11630.2"/>
    <property type="gene ID" value="AT5G11630"/>
</dbReference>
<dbReference type="EnsemblPlants" id="AT5G11630.3">
    <molecule id="Q6NNL9-1"/>
    <property type="protein sequence ID" value="AT5G11630.3"/>
    <property type="gene ID" value="AT5G11630"/>
</dbReference>
<dbReference type="GeneID" id="831035"/>
<dbReference type="Gramene" id="AT5G11630.1">
    <molecule id="Q6NNL9-1"/>
    <property type="protein sequence ID" value="AT5G11630.1"/>
    <property type="gene ID" value="AT5G11630"/>
</dbReference>
<dbReference type="Gramene" id="AT5G11630.2">
    <molecule id="Q6NNL9-2"/>
    <property type="protein sequence ID" value="AT5G11630.2"/>
    <property type="gene ID" value="AT5G11630"/>
</dbReference>
<dbReference type="Gramene" id="AT5G11630.3">
    <molecule id="Q6NNL9-1"/>
    <property type="protein sequence ID" value="AT5G11630.3"/>
    <property type="gene ID" value="AT5G11630"/>
</dbReference>
<dbReference type="KEGG" id="ath:AT5G11630"/>
<dbReference type="Araport" id="AT5G11630"/>
<dbReference type="TAIR" id="AT5G11630">
    <property type="gene designation" value="NOXY2"/>
</dbReference>
<dbReference type="eggNOG" id="ENOG502S772">
    <property type="taxonomic scope" value="Eukaryota"/>
</dbReference>
<dbReference type="HOGENOM" id="CLU_146975_1_1_1"/>
<dbReference type="InParanoid" id="Q6NNL9"/>
<dbReference type="OMA" id="PAINFVK"/>
<dbReference type="PhylomeDB" id="Q6NNL9"/>
<dbReference type="PRO" id="PR:Q6NNL9"/>
<dbReference type="Proteomes" id="UP000006548">
    <property type="component" value="Chromosome 5"/>
</dbReference>
<dbReference type="ExpressionAtlas" id="Q6NNL9">
    <property type="expression patterns" value="baseline and differential"/>
</dbReference>
<dbReference type="GO" id="GO:0005739">
    <property type="term" value="C:mitochondrion"/>
    <property type="evidence" value="ECO:0000314"/>
    <property type="project" value="UniProtKB"/>
</dbReference>
<dbReference type="GO" id="GO:0052543">
    <property type="term" value="P:callose deposition in cell wall"/>
    <property type="evidence" value="ECO:0000315"/>
    <property type="project" value="UniProtKB"/>
</dbReference>
<dbReference type="GO" id="GO:0071433">
    <property type="term" value="P:cell wall repair"/>
    <property type="evidence" value="ECO:0000315"/>
    <property type="project" value="UniProtKB"/>
</dbReference>
<dbReference type="GO" id="GO:0042742">
    <property type="term" value="P:defense response to bacterium"/>
    <property type="evidence" value="ECO:0000315"/>
    <property type="project" value="UniProtKB"/>
</dbReference>
<dbReference type="GO" id="GO:0050832">
    <property type="term" value="P:defense response to fungus"/>
    <property type="evidence" value="ECO:0000315"/>
    <property type="project" value="UniProtKB"/>
</dbReference>
<dbReference type="GO" id="GO:0010311">
    <property type="term" value="P:lateral root formation"/>
    <property type="evidence" value="ECO:0000315"/>
    <property type="project" value="UniProtKB"/>
</dbReference>
<dbReference type="GO" id="GO:0019372">
    <property type="term" value="P:lipoxygenase pathway"/>
    <property type="evidence" value="ECO:0000315"/>
    <property type="project" value="UniProtKB"/>
</dbReference>
<dbReference type="GO" id="GO:0048311">
    <property type="term" value="P:mitochondrion distribution"/>
    <property type="evidence" value="ECO:0000315"/>
    <property type="project" value="UniProtKB"/>
</dbReference>
<dbReference type="GO" id="GO:0031407">
    <property type="term" value="P:oxylipin metabolic process"/>
    <property type="evidence" value="ECO:0000315"/>
    <property type="project" value="UniProtKB"/>
</dbReference>
<dbReference type="GO" id="GO:2000023">
    <property type="term" value="P:regulation of lateral root development"/>
    <property type="evidence" value="ECO:0000315"/>
    <property type="project" value="UniProtKB"/>
</dbReference>
<dbReference type="GO" id="GO:0010821">
    <property type="term" value="P:regulation of mitochondrion organization"/>
    <property type="evidence" value="ECO:0000315"/>
    <property type="project" value="UniProtKB"/>
</dbReference>
<dbReference type="GO" id="GO:2000280">
    <property type="term" value="P:regulation of root development"/>
    <property type="evidence" value="ECO:0000315"/>
    <property type="project" value="UniProtKB"/>
</dbReference>
<dbReference type="GO" id="GO:0009617">
    <property type="term" value="P:response to bacterium"/>
    <property type="evidence" value="ECO:0000270"/>
    <property type="project" value="UniProtKB"/>
</dbReference>
<dbReference type="GO" id="GO:0009635">
    <property type="term" value="P:response to herbicide"/>
    <property type="evidence" value="ECO:0000315"/>
    <property type="project" value="UniProtKB"/>
</dbReference>
<dbReference type="GO" id="GO:0048364">
    <property type="term" value="P:root development"/>
    <property type="evidence" value="ECO:0000315"/>
    <property type="project" value="UniProtKB"/>
</dbReference>
<dbReference type="InterPro" id="IPR043459">
    <property type="entry name" value="NFD6/NOXY2-like"/>
</dbReference>
<dbReference type="PANTHER" id="PTHR33156">
    <property type="entry name" value="OS02G0230000 PROTEIN"/>
    <property type="match status" value="1"/>
</dbReference>
<dbReference type="PANTHER" id="PTHR33156:SF39">
    <property type="entry name" value="PROTEIN NONRESPONDING TO OXYLIPINS 2, MITOCHONDRIAL"/>
    <property type="match status" value="1"/>
</dbReference>
<name>NOXY2_ARATH</name>
<organism>
    <name type="scientific">Arabidopsis thaliana</name>
    <name type="common">Mouse-ear cress</name>
    <dbReference type="NCBI Taxonomy" id="3702"/>
    <lineage>
        <taxon>Eukaryota</taxon>
        <taxon>Viridiplantae</taxon>
        <taxon>Streptophyta</taxon>
        <taxon>Embryophyta</taxon>
        <taxon>Tracheophyta</taxon>
        <taxon>Spermatophyta</taxon>
        <taxon>Magnoliopsida</taxon>
        <taxon>eudicotyledons</taxon>
        <taxon>Gunneridae</taxon>
        <taxon>Pentapetalae</taxon>
        <taxon>rosids</taxon>
        <taxon>malvids</taxon>
        <taxon>Brassicales</taxon>
        <taxon>Brassicaceae</taxon>
        <taxon>Camelineae</taxon>
        <taxon>Arabidopsis</taxon>
    </lineage>
</organism>
<evidence type="ECO:0000255" key="1"/>
<evidence type="ECO:0000269" key="2">
    <source>
    </source>
</evidence>
<evidence type="ECO:0000269" key="3">
    <source>
    </source>
</evidence>
<evidence type="ECO:0000269" key="4">
    <source>
    </source>
</evidence>
<evidence type="ECO:0000303" key="5">
    <source>
    </source>
</evidence>
<evidence type="ECO:0000303" key="6">
    <source>
    </source>
</evidence>
<evidence type="ECO:0000312" key="7">
    <source>
        <dbReference type="Araport" id="AT5G11630"/>
    </source>
</evidence>
<evidence type="ECO:0000312" key="8">
    <source>
        <dbReference type="EMBL" id="CAB87681.1"/>
    </source>
</evidence>